<proteinExistence type="evidence at transcript level"/>
<keyword id="KW-0406">Ion transport</keyword>
<keyword id="KW-0460">Magnesium</keyword>
<keyword id="KW-0472">Membrane</keyword>
<keyword id="KW-0479">Metal-binding</keyword>
<keyword id="KW-0496">Mitochondrion</keyword>
<keyword id="KW-0999">Mitochondrion inner membrane</keyword>
<keyword id="KW-1185">Reference proteome</keyword>
<keyword id="KW-0809">Transit peptide</keyword>
<keyword id="KW-0812">Transmembrane</keyword>
<keyword id="KW-1133">Transmembrane helix</keyword>
<keyword id="KW-0813">Transport</keyword>
<sequence>MECLRSLPCLLPRAMRLPRRTLCALALDLTSVARPVAACGRAANLVGRSRAAQLCGPGRLRVAGEVHRLRTSDVSQATLASVAPVFTVTKFDKQGNVTSFEKKKTELYQELGLQARDLRFQHVMSITVRNNRIIMRMEYLKAVITPECLLILDYRNLNLEQWLFRELPSQLSGEGQLVTYPLPFEFRAIEALLQYWINTLQGKLSILQPLILETLDALVDPKHSSVDRSKLHILLQNGKSLSELETDIKIFKESILEILDEEELLEELCLSKWSDPQVFEKSSAGIDHAEEMELLLENYYRLADDLSNAARELRVLIDDSQSIIFINLDSHRNVMMRLNLQLTMGTFSLSLFGLMGVAFGMNLESSLEEDHRIFWLIIGIMFMGSGLIWRRLLSFLGRQLEAPLPPMV</sequence>
<protein>
    <recommendedName>
        <fullName>Magnesium transporter MRS2 homolog, mitochondrial</fullName>
    </recommendedName>
    <alternativeName>
        <fullName>MRS2-like protein</fullName>
    </alternativeName>
</protein>
<comment type="function">
    <text evidence="1">Magnesium transporter that mediates the influx of magnesium into the mitochondrial matrix and regulates magnesium metabolism (By similarity). Also permeable to calcium, sodium and potassium ions (By similarity). Required for normal expression of the mitochondrial respiratory complex I subunits (By similarity). May play a role in maintaining the inner mitochondrial membrane potential (By similarity).</text>
</comment>
<comment type="activity regulation">
    <text evidence="1">May be regulated by calcium ions.</text>
</comment>
<comment type="subunit">
    <text evidence="1">Homopentamer.</text>
</comment>
<comment type="subcellular location">
    <subcellularLocation>
        <location evidence="1">Mitochondrion inner membrane</location>
        <topology evidence="1">Multi-pass membrane protein</topology>
    </subcellularLocation>
</comment>
<comment type="domain">
    <text evidence="1">The GMN motif acts as an ion selectivity filter.</text>
</comment>
<comment type="similarity">
    <text evidence="3">Belongs to the CorA metal ion transporter (MIT) (TC 1.A.35) family.</text>
</comment>
<evidence type="ECO:0000250" key="1">
    <source>
        <dbReference type="UniProtKB" id="Q9HD23"/>
    </source>
</evidence>
<evidence type="ECO:0000255" key="2"/>
<evidence type="ECO:0000305" key="3"/>
<accession>Q4R4M1</accession>
<dbReference type="EMBL" id="AB169873">
    <property type="protein sequence ID" value="BAE01954.1"/>
    <property type="molecule type" value="mRNA"/>
</dbReference>
<dbReference type="SMR" id="Q4R4M1"/>
<dbReference type="STRING" id="9541.ENSMFAP00000037732"/>
<dbReference type="eggNOG" id="KOG2662">
    <property type="taxonomic scope" value="Eukaryota"/>
</dbReference>
<dbReference type="Proteomes" id="UP000233100">
    <property type="component" value="Unplaced"/>
</dbReference>
<dbReference type="GO" id="GO:0005743">
    <property type="term" value="C:mitochondrial inner membrane"/>
    <property type="evidence" value="ECO:0007669"/>
    <property type="project" value="UniProtKB-SubCell"/>
</dbReference>
<dbReference type="GO" id="GO:0005739">
    <property type="term" value="C:mitochondrion"/>
    <property type="evidence" value="ECO:0000250"/>
    <property type="project" value="UniProtKB"/>
</dbReference>
<dbReference type="GO" id="GO:0015095">
    <property type="term" value="F:magnesium ion transmembrane transporter activity"/>
    <property type="evidence" value="ECO:0000250"/>
    <property type="project" value="UniProtKB"/>
</dbReference>
<dbReference type="GO" id="GO:0045016">
    <property type="term" value="P:mitochondrial magnesium ion transmembrane transport"/>
    <property type="evidence" value="ECO:0000250"/>
    <property type="project" value="UniProtKB"/>
</dbReference>
<dbReference type="CDD" id="cd12823">
    <property type="entry name" value="Mrs2_Mfm1p-like"/>
    <property type="match status" value="1"/>
</dbReference>
<dbReference type="FunFam" id="1.20.58.340:FF:000007">
    <property type="entry name" value="Magnesium transporter MRS2 homolog, mitochondrial"/>
    <property type="match status" value="1"/>
</dbReference>
<dbReference type="FunFam" id="2.40.128.330:FF:000003">
    <property type="entry name" value="Magnesium transporter MRS2 homolog, mitochondrial"/>
    <property type="match status" value="1"/>
</dbReference>
<dbReference type="Gene3D" id="2.40.128.330">
    <property type="match status" value="1"/>
</dbReference>
<dbReference type="Gene3D" id="1.20.58.340">
    <property type="entry name" value="Magnesium transport protein CorA, transmembrane region"/>
    <property type="match status" value="1"/>
</dbReference>
<dbReference type="InterPro" id="IPR039204">
    <property type="entry name" value="MRS2-like"/>
</dbReference>
<dbReference type="PANTHER" id="PTHR13890:SF0">
    <property type="entry name" value="MAGNESIUM TRANSPORTER MRS2 HOMOLOG, MITOCHONDRIAL"/>
    <property type="match status" value="1"/>
</dbReference>
<dbReference type="PANTHER" id="PTHR13890">
    <property type="entry name" value="RNA SPLICING PROTEIN MRS2, MITOCHONDRIAL"/>
    <property type="match status" value="1"/>
</dbReference>
<dbReference type="Pfam" id="PF22099">
    <property type="entry name" value="MRS2-like"/>
    <property type="match status" value="1"/>
</dbReference>
<feature type="transit peptide" description="Mitochondrion" evidence="2">
    <location>
        <begin position="1"/>
        <end position="62"/>
    </location>
</feature>
<feature type="chain" id="PRO_0000042838" description="Magnesium transporter MRS2 homolog, mitochondrial">
    <location>
        <begin position="63"/>
        <end position="408"/>
    </location>
</feature>
<feature type="topological domain" description="Mitochondrial matrix" evidence="1">
    <location>
        <begin position="63"/>
        <end position="339"/>
    </location>
</feature>
<feature type="transmembrane region" description="Helical; Name=1" evidence="1">
    <location>
        <begin position="340"/>
        <end position="359"/>
    </location>
</feature>
<feature type="topological domain" description="Mitochondrial intermembrane" evidence="1">
    <location>
        <begin position="360"/>
        <end position="370"/>
    </location>
</feature>
<feature type="transmembrane region" description="Helical; Name=2" evidence="1">
    <location>
        <begin position="371"/>
        <end position="401"/>
    </location>
</feature>
<feature type="topological domain" description="Mitochondrial matrix" evidence="1">
    <location>
        <begin position="402"/>
        <end position="408"/>
    </location>
</feature>
<feature type="short sequence motif" description="GMN motif" evidence="1">
    <location>
        <begin position="360"/>
        <end position="362"/>
    </location>
</feature>
<feature type="binding site" evidence="1">
    <location>
        <position position="243"/>
    </location>
    <ligand>
        <name>Mg(2+)</name>
        <dbReference type="ChEBI" id="CHEBI:18420"/>
        <label>1</label>
    </ligand>
</feature>
<feature type="binding site" evidence="1">
    <location>
        <position position="246"/>
    </location>
    <ligand>
        <name>Mg(2+)</name>
        <dbReference type="ChEBI" id="CHEBI:18420"/>
        <label>1</label>
    </ligand>
</feature>
<feature type="binding site" evidence="1">
    <location>
        <position position="247"/>
    </location>
    <ligand>
        <name>Mg(2+)</name>
        <dbReference type="ChEBI" id="CHEBI:18420"/>
        <label>1</label>
    </ligand>
</feature>
<feature type="binding site" evidence="1">
    <location>
        <position position="312"/>
    </location>
    <ligand>
        <name>Mg(2+)</name>
        <dbReference type="ChEBI" id="CHEBI:18420"/>
        <label>1</label>
    </ligand>
</feature>
<feature type="binding site" evidence="1">
    <location>
        <position position="329"/>
    </location>
    <ligand>
        <name>Mg(2+)</name>
        <dbReference type="ChEBI" id="CHEBI:18420"/>
        <label>2</label>
    </ligand>
</feature>
<feature type="binding site" evidence="1">
    <location>
        <position position="360"/>
    </location>
    <ligand>
        <name>Mg(2+)</name>
        <dbReference type="ChEBI" id="CHEBI:18420"/>
        <label>3</label>
    </ligand>
</feature>
<feature type="binding site" evidence="1">
    <location>
        <position position="362"/>
    </location>
    <ligand>
        <name>Mg(2+)</name>
        <dbReference type="ChEBI" id="CHEBI:18420"/>
        <label>3</label>
    </ligand>
</feature>
<organism>
    <name type="scientific">Macaca fascicularis</name>
    <name type="common">Crab-eating macaque</name>
    <name type="synonym">Cynomolgus monkey</name>
    <dbReference type="NCBI Taxonomy" id="9541"/>
    <lineage>
        <taxon>Eukaryota</taxon>
        <taxon>Metazoa</taxon>
        <taxon>Chordata</taxon>
        <taxon>Craniata</taxon>
        <taxon>Vertebrata</taxon>
        <taxon>Euteleostomi</taxon>
        <taxon>Mammalia</taxon>
        <taxon>Eutheria</taxon>
        <taxon>Euarchontoglires</taxon>
        <taxon>Primates</taxon>
        <taxon>Haplorrhini</taxon>
        <taxon>Catarrhini</taxon>
        <taxon>Cercopithecidae</taxon>
        <taxon>Cercopithecinae</taxon>
        <taxon>Macaca</taxon>
    </lineage>
</organism>
<reference key="1">
    <citation type="submission" date="2005-06" db="EMBL/GenBank/DDBJ databases">
        <title>DNA sequences of macaque genes expressed in brain or testis and its evolutionary implications.</title>
        <authorList>
            <consortium name="International consortium for macaque cDNA sequencing and analysis"/>
        </authorList>
    </citation>
    <scope>NUCLEOTIDE SEQUENCE [LARGE SCALE MRNA]</scope>
    <source>
        <tissue>Frontal cortex</tissue>
    </source>
</reference>
<gene>
    <name type="primary">MRS2</name>
    <name type="synonym">MRS2L</name>
    <name type="ORF">QflA-11728</name>
</gene>
<name>MRS2_MACFA</name>